<proteinExistence type="inferred from homology"/>
<evidence type="ECO:0000255" key="1">
    <source>
        <dbReference type="HAMAP-Rule" id="MF_00300"/>
    </source>
</evidence>
<evidence type="ECO:0000256" key="2">
    <source>
        <dbReference type="SAM" id="MobiDB-lite"/>
    </source>
</evidence>
<protein>
    <recommendedName>
        <fullName evidence="1">Chorismate synthase 1</fullName>
        <shortName evidence="1">CS 1</shortName>
        <ecNumber evidence="1">4.2.3.5</ecNumber>
    </recommendedName>
    <alternativeName>
        <fullName evidence="1">5-enolpyruvylshikimate-3-phosphate phospholyase 1</fullName>
    </alternativeName>
</protein>
<accession>A0RBX0</accession>
<gene>
    <name evidence="1" type="primary">aroC1</name>
    <name type="ordered locus">BALH_1370</name>
</gene>
<feature type="chain" id="PRO_0000322388" description="Chorismate synthase 1">
    <location>
        <begin position="1"/>
        <end position="390"/>
    </location>
</feature>
<feature type="region of interest" description="Disordered" evidence="2">
    <location>
        <begin position="95"/>
        <end position="117"/>
    </location>
</feature>
<feature type="binding site" evidence="1">
    <location>
        <position position="39"/>
    </location>
    <ligand>
        <name>NADP(+)</name>
        <dbReference type="ChEBI" id="CHEBI:58349"/>
    </ligand>
</feature>
<feature type="binding site" evidence="1">
    <location>
        <position position="45"/>
    </location>
    <ligand>
        <name>NADP(+)</name>
        <dbReference type="ChEBI" id="CHEBI:58349"/>
    </ligand>
</feature>
<feature type="binding site" evidence="1">
    <location>
        <begin position="132"/>
        <end position="134"/>
    </location>
    <ligand>
        <name>FMN</name>
        <dbReference type="ChEBI" id="CHEBI:58210"/>
    </ligand>
</feature>
<feature type="binding site" evidence="1">
    <location>
        <begin position="253"/>
        <end position="254"/>
    </location>
    <ligand>
        <name>FMN</name>
        <dbReference type="ChEBI" id="CHEBI:58210"/>
    </ligand>
</feature>
<feature type="binding site" evidence="1">
    <location>
        <position position="298"/>
    </location>
    <ligand>
        <name>FMN</name>
        <dbReference type="ChEBI" id="CHEBI:58210"/>
    </ligand>
</feature>
<feature type="binding site" evidence="1">
    <location>
        <begin position="313"/>
        <end position="317"/>
    </location>
    <ligand>
        <name>FMN</name>
        <dbReference type="ChEBI" id="CHEBI:58210"/>
    </ligand>
</feature>
<feature type="binding site" evidence="1">
    <location>
        <position position="339"/>
    </location>
    <ligand>
        <name>FMN</name>
        <dbReference type="ChEBI" id="CHEBI:58210"/>
    </ligand>
</feature>
<dbReference type="EC" id="4.2.3.5" evidence="1"/>
<dbReference type="EMBL" id="CP000485">
    <property type="protein sequence ID" value="ABK84713.1"/>
    <property type="molecule type" value="Genomic_DNA"/>
</dbReference>
<dbReference type="SMR" id="A0RBX0"/>
<dbReference type="KEGG" id="btl:BALH_1370"/>
<dbReference type="HOGENOM" id="CLU_034547_2_0_9"/>
<dbReference type="UniPathway" id="UPA00053">
    <property type="reaction ID" value="UER00090"/>
</dbReference>
<dbReference type="GO" id="GO:0005829">
    <property type="term" value="C:cytosol"/>
    <property type="evidence" value="ECO:0007669"/>
    <property type="project" value="TreeGrafter"/>
</dbReference>
<dbReference type="GO" id="GO:0004107">
    <property type="term" value="F:chorismate synthase activity"/>
    <property type="evidence" value="ECO:0007669"/>
    <property type="project" value="UniProtKB-UniRule"/>
</dbReference>
<dbReference type="GO" id="GO:0010181">
    <property type="term" value="F:FMN binding"/>
    <property type="evidence" value="ECO:0007669"/>
    <property type="project" value="TreeGrafter"/>
</dbReference>
<dbReference type="GO" id="GO:0008652">
    <property type="term" value="P:amino acid biosynthetic process"/>
    <property type="evidence" value="ECO:0007669"/>
    <property type="project" value="UniProtKB-KW"/>
</dbReference>
<dbReference type="GO" id="GO:0009073">
    <property type="term" value="P:aromatic amino acid family biosynthetic process"/>
    <property type="evidence" value="ECO:0007669"/>
    <property type="project" value="UniProtKB-KW"/>
</dbReference>
<dbReference type="GO" id="GO:0009423">
    <property type="term" value="P:chorismate biosynthetic process"/>
    <property type="evidence" value="ECO:0007669"/>
    <property type="project" value="UniProtKB-UniRule"/>
</dbReference>
<dbReference type="CDD" id="cd07304">
    <property type="entry name" value="Chorismate_synthase"/>
    <property type="match status" value="1"/>
</dbReference>
<dbReference type="FunFam" id="3.60.150.10:FF:000002">
    <property type="entry name" value="Chorismate synthase"/>
    <property type="match status" value="1"/>
</dbReference>
<dbReference type="Gene3D" id="3.60.150.10">
    <property type="entry name" value="Chorismate synthase AroC"/>
    <property type="match status" value="1"/>
</dbReference>
<dbReference type="HAMAP" id="MF_00300">
    <property type="entry name" value="Chorismate_synth"/>
    <property type="match status" value="1"/>
</dbReference>
<dbReference type="InterPro" id="IPR000453">
    <property type="entry name" value="Chorismate_synth"/>
</dbReference>
<dbReference type="InterPro" id="IPR035904">
    <property type="entry name" value="Chorismate_synth_AroC_sf"/>
</dbReference>
<dbReference type="InterPro" id="IPR020541">
    <property type="entry name" value="Chorismate_synthase_CS"/>
</dbReference>
<dbReference type="NCBIfam" id="TIGR00033">
    <property type="entry name" value="aroC"/>
    <property type="match status" value="1"/>
</dbReference>
<dbReference type="NCBIfam" id="NF003793">
    <property type="entry name" value="PRK05382.1"/>
    <property type="match status" value="1"/>
</dbReference>
<dbReference type="PANTHER" id="PTHR21085">
    <property type="entry name" value="CHORISMATE SYNTHASE"/>
    <property type="match status" value="1"/>
</dbReference>
<dbReference type="PANTHER" id="PTHR21085:SF0">
    <property type="entry name" value="CHORISMATE SYNTHASE"/>
    <property type="match status" value="1"/>
</dbReference>
<dbReference type="Pfam" id="PF01264">
    <property type="entry name" value="Chorismate_synt"/>
    <property type="match status" value="1"/>
</dbReference>
<dbReference type="PIRSF" id="PIRSF001456">
    <property type="entry name" value="Chorismate_synth"/>
    <property type="match status" value="1"/>
</dbReference>
<dbReference type="SUPFAM" id="SSF103263">
    <property type="entry name" value="Chorismate synthase, AroC"/>
    <property type="match status" value="1"/>
</dbReference>
<dbReference type="PROSITE" id="PS00787">
    <property type="entry name" value="CHORISMATE_SYNTHASE_1"/>
    <property type="match status" value="1"/>
</dbReference>
<dbReference type="PROSITE" id="PS00788">
    <property type="entry name" value="CHORISMATE_SYNTHASE_2"/>
    <property type="match status" value="1"/>
</dbReference>
<dbReference type="PROSITE" id="PS00789">
    <property type="entry name" value="CHORISMATE_SYNTHASE_3"/>
    <property type="match status" value="1"/>
</dbReference>
<reference key="1">
    <citation type="journal article" date="2007" name="J. Bacteriol.">
        <title>The complete genome sequence of Bacillus thuringiensis Al Hakam.</title>
        <authorList>
            <person name="Challacombe J.F."/>
            <person name="Altherr M.R."/>
            <person name="Xie G."/>
            <person name="Bhotika S.S."/>
            <person name="Brown N."/>
            <person name="Bruce D."/>
            <person name="Campbell C.S."/>
            <person name="Campbell M.L."/>
            <person name="Chen J."/>
            <person name="Chertkov O."/>
            <person name="Cleland C."/>
            <person name="Dimitrijevic M."/>
            <person name="Doggett N.A."/>
            <person name="Fawcett J.J."/>
            <person name="Glavina T."/>
            <person name="Goodwin L.A."/>
            <person name="Green L.D."/>
            <person name="Han C.S."/>
            <person name="Hill K.K."/>
            <person name="Hitchcock P."/>
            <person name="Jackson P.J."/>
            <person name="Keim P."/>
            <person name="Kewalramani A.R."/>
            <person name="Longmire J."/>
            <person name="Lucas S."/>
            <person name="Malfatti S."/>
            <person name="Martinez D."/>
            <person name="McMurry K."/>
            <person name="Meincke L.J."/>
            <person name="Misra M."/>
            <person name="Moseman B.L."/>
            <person name="Mundt M."/>
            <person name="Munk A.C."/>
            <person name="Okinaka R.T."/>
            <person name="Parson-Quintana B."/>
            <person name="Reilly L.P."/>
            <person name="Richardson P."/>
            <person name="Robinson D.L."/>
            <person name="Saunders E."/>
            <person name="Tapia R."/>
            <person name="Tesmer J.G."/>
            <person name="Thayer N."/>
            <person name="Thompson L.S."/>
            <person name="Tice H."/>
            <person name="Ticknor L.O."/>
            <person name="Wills P.L."/>
            <person name="Gilna P."/>
            <person name="Brettin T.S."/>
        </authorList>
    </citation>
    <scope>NUCLEOTIDE SEQUENCE [LARGE SCALE GENOMIC DNA]</scope>
    <source>
        <strain>Al Hakam</strain>
    </source>
</reference>
<organism>
    <name type="scientific">Bacillus thuringiensis (strain Al Hakam)</name>
    <dbReference type="NCBI Taxonomy" id="412694"/>
    <lineage>
        <taxon>Bacteria</taxon>
        <taxon>Bacillati</taxon>
        <taxon>Bacillota</taxon>
        <taxon>Bacilli</taxon>
        <taxon>Bacillales</taxon>
        <taxon>Bacillaceae</taxon>
        <taxon>Bacillus</taxon>
        <taxon>Bacillus cereus group</taxon>
    </lineage>
</organism>
<comment type="function">
    <text evidence="1">Catalyzes the anti-1,4-elimination of the C-3 phosphate and the C-6 proR hydrogen from 5-enolpyruvylshikimate-3-phosphate (EPSP) to yield chorismate, which is the branch point compound that serves as the starting substrate for the three terminal pathways of aromatic amino acid biosynthesis. This reaction introduces a second double bond into the aromatic ring system.</text>
</comment>
<comment type="catalytic activity">
    <reaction evidence="1">
        <text>5-O-(1-carboxyvinyl)-3-phosphoshikimate = chorismate + phosphate</text>
        <dbReference type="Rhea" id="RHEA:21020"/>
        <dbReference type="ChEBI" id="CHEBI:29748"/>
        <dbReference type="ChEBI" id="CHEBI:43474"/>
        <dbReference type="ChEBI" id="CHEBI:57701"/>
        <dbReference type="EC" id="4.2.3.5"/>
    </reaction>
</comment>
<comment type="cofactor">
    <cofactor evidence="1">
        <name>FMNH2</name>
        <dbReference type="ChEBI" id="CHEBI:57618"/>
    </cofactor>
    <text evidence="1">Reduced FMN (FMNH(2)).</text>
</comment>
<comment type="pathway">
    <text evidence="1">Metabolic intermediate biosynthesis; chorismate biosynthesis; chorismate from D-erythrose 4-phosphate and phosphoenolpyruvate: step 7/7.</text>
</comment>
<comment type="subunit">
    <text evidence="1">Homotetramer.</text>
</comment>
<comment type="similarity">
    <text evidence="1">Belongs to the chorismate synthase family.</text>
</comment>
<keyword id="KW-0028">Amino-acid biosynthesis</keyword>
<keyword id="KW-0057">Aromatic amino acid biosynthesis</keyword>
<keyword id="KW-0274">FAD</keyword>
<keyword id="KW-0285">Flavoprotein</keyword>
<keyword id="KW-0288">FMN</keyword>
<keyword id="KW-0456">Lyase</keyword>
<keyword id="KW-0521">NADP</keyword>
<name>AROC1_BACAH</name>
<sequence length="390" mass="42438">MRYITAGESHGPQLTTIIEGVPAGLPLVADDINEELARRQKGYGRGRRMQIETDQVQIVSGVRHGETLGSPIALVVENRDFAHWTKIMGAEPLTEQEEKEMKRKVTKPRPGHADLNGAIKYGHRDMRNVLERSSARETTVRVAAGAVAKKVLAELGITVAGHVIEIGGVEAKETTYRSIEELKSITEASPVRCLDEEAGNQMIKAIDDAKSNGDSIGGIVEVIVEGMPIGVGSYVHYDRKLDAKLAAAIMSINAFKGVEIGIGFEAAHRPGSEVHDEILWNEEHGYTRRTNNAGGLEGGMTTGMPIVVRGVMKPIPTLYKPLQSVDIDTKEPFTASIERSDSCAVPAASVVAEAVVAWELATALIEQFGLDRMDLIRENIEKHNEYARGF</sequence>